<reference key="1">
    <citation type="journal article" date="2001" name="Nature">
        <title>Complete genome sequence of a multiple drug resistant Salmonella enterica serovar Typhi CT18.</title>
        <authorList>
            <person name="Parkhill J."/>
            <person name="Dougan G."/>
            <person name="James K.D."/>
            <person name="Thomson N.R."/>
            <person name="Pickard D."/>
            <person name="Wain J."/>
            <person name="Churcher C.M."/>
            <person name="Mungall K.L."/>
            <person name="Bentley S.D."/>
            <person name="Holden M.T.G."/>
            <person name="Sebaihia M."/>
            <person name="Baker S."/>
            <person name="Basham D."/>
            <person name="Brooks K."/>
            <person name="Chillingworth T."/>
            <person name="Connerton P."/>
            <person name="Cronin A."/>
            <person name="Davis P."/>
            <person name="Davies R.M."/>
            <person name="Dowd L."/>
            <person name="White N."/>
            <person name="Farrar J."/>
            <person name="Feltwell T."/>
            <person name="Hamlin N."/>
            <person name="Haque A."/>
            <person name="Hien T.T."/>
            <person name="Holroyd S."/>
            <person name="Jagels K."/>
            <person name="Krogh A."/>
            <person name="Larsen T.S."/>
            <person name="Leather S."/>
            <person name="Moule S."/>
            <person name="O'Gaora P."/>
            <person name="Parry C."/>
            <person name="Quail M.A."/>
            <person name="Rutherford K.M."/>
            <person name="Simmonds M."/>
            <person name="Skelton J."/>
            <person name="Stevens K."/>
            <person name="Whitehead S."/>
            <person name="Barrell B.G."/>
        </authorList>
    </citation>
    <scope>NUCLEOTIDE SEQUENCE [LARGE SCALE GENOMIC DNA]</scope>
    <source>
        <strain>CT18</strain>
    </source>
</reference>
<reference key="2">
    <citation type="journal article" date="2003" name="J. Bacteriol.">
        <title>Comparative genomics of Salmonella enterica serovar Typhi strains Ty2 and CT18.</title>
        <authorList>
            <person name="Deng W."/>
            <person name="Liou S.-R."/>
            <person name="Plunkett G. III"/>
            <person name="Mayhew G.F."/>
            <person name="Rose D.J."/>
            <person name="Burland V."/>
            <person name="Kodoyianni V."/>
            <person name="Schwartz D.C."/>
            <person name="Blattner F.R."/>
        </authorList>
    </citation>
    <scope>NUCLEOTIDE SEQUENCE [LARGE SCALE GENOMIC DNA]</scope>
    <source>
        <strain>ATCC 700931 / Ty2</strain>
    </source>
</reference>
<keyword id="KW-0067">ATP-binding</keyword>
<keyword id="KW-0963">Cytoplasm</keyword>
<keyword id="KW-0315">Glutamine amidotransferase</keyword>
<keyword id="KW-0436">Ligase</keyword>
<keyword id="KW-0460">Magnesium</keyword>
<keyword id="KW-0479">Metal-binding</keyword>
<keyword id="KW-0547">Nucleotide-binding</keyword>
<keyword id="KW-0658">Purine biosynthesis</keyword>
<sequence length="1295" mass="141544">MMEILRGSPALSAFRINKLLARFQAANLQVHNIYAEYVHFADLNAPLNDSEQAQLTRLLQYGPALSSHTLAGKLLLVTPRPGTISPWSSKATDIAHNCGLQQIDRLERGVAYYIEASTLTAEQWRQVAAELHDRMMETVFSSLTDAEKLFIHHQPAPVSSVDLLGEGRQALIDANLRLGLALAEDEIDYLQEAFTKLGRNPNDIELYMFAQANSEHCRHKIFNADWIIDGKPQPKSLFKMIKNTFETTPDYVLSAYKDNAAVMEGSAVGRYFADHNTGRYDFHQEPAHILMKVETHNHPTAISPWPGAATGSGGEIRDEGATGRGAKPKAGLVGFSVSNLRIPGFEQPWEEDFGKPERIVTALDIMTEGPLGGAAFNNEFGRPALTGYFRTYEEKVNSHNGEELRGYHKPIMLAGGIGNIRADHVQKGEIVVGAKLIVLGGPAMNIGLGGGAASSMASGQSDADLDFASVQRDNPEMERRCQEVIDRCWQLGDANPILFIHDVGAGGLSNAMPELVSDGGRGGKFELRDILSDEPGMSPLEIWCNESQERYVLAVAADQLPLFDELCKRERAPYAVIGDATEEQHLSLHDNHFDNQPIDLPLDVLLGKTPKMTRDVQTLKAKGDALNRADITIADAVNRVLHLPTVAEKTFLVTIGDRTVTGMVARDQMVGPWQVPVADCAVTTASLDSYYGEAMSIGERAPVALLDFAASARLAVGEALTNIAATQIGDIKRIKLSANWMAAAGHPGEDAGLYDAVKAVGEELCPQLGLTIPVGKDSMSMKTRWQEGNEQREMTSPLSLVISAFARVEDVRHTLTPQLSTEDNALLLIDLGKGHNALGATALAQVYRQLGDKPADVRDVAQLKGFYDAMQVLVAARKLLAWHDRSDGGLLVTLAEMAFAGHCGVQVDIAALGDDHLAALFNEELGGVIQVRAEDRDAVETLLAQYGLADCVHYLGQALAGDRFVITANDRTVFSESRTTLRVWWAETTWQMQRLRDNPQCADQEHEAKANDADPGLNVKLSFDINEDIAAPYIATGARPKVAVLREQGVNSHVEMAAAFHRAGFDAIDVHMSDLLGGRIGLGNFHALVACGGFSYGDVLGAGEGWAKSILFNHRVRDEFETFFHRPQTLALGVCNGCQMMSNLRELIPGSELWPRFVRNHSDRFEARFSLVEVTQSPSLLLQGMVGSQMPIAVSHGEGRVEVRDDAHLAALESKGLVALRYVDNFGKVTETYPANPNGSPNGITAVTTENGRVTIMMPHPERVFRTVANSWHPENWGEDSPWMRIFRNARKQLG</sequence>
<organism>
    <name type="scientific">Salmonella typhi</name>
    <dbReference type="NCBI Taxonomy" id="90370"/>
    <lineage>
        <taxon>Bacteria</taxon>
        <taxon>Pseudomonadati</taxon>
        <taxon>Pseudomonadota</taxon>
        <taxon>Gammaproteobacteria</taxon>
        <taxon>Enterobacterales</taxon>
        <taxon>Enterobacteriaceae</taxon>
        <taxon>Salmonella</taxon>
    </lineage>
</organism>
<comment type="function">
    <text evidence="1">Phosphoribosylformylglycinamidine synthase involved in the purines biosynthetic pathway. Catalyzes the ATP-dependent conversion of formylglycinamide ribonucleotide (FGAR) and glutamine to yield formylglycinamidine ribonucleotide (FGAM) and glutamate.</text>
</comment>
<comment type="catalytic activity">
    <reaction evidence="1">
        <text>N(2)-formyl-N(1)-(5-phospho-beta-D-ribosyl)glycinamide + L-glutamine + ATP + H2O = 2-formamido-N(1)-(5-O-phospho-beta-D-ribosyl)acetamidine + L-glutamate + ADP + phosphate + H(+)</text>
        <dbReference type="Rhea" id="RHEA:17129"/>
        <dbReference type="ChEBI" id="CHEBI:15377"/>
        <dbReference type="ChEBI" id="CHEBI:15378"/>
        <dbReference type="ChEBI" id="CHEBI:29985"/>
        <dbReference type="ChEBI" id="CHEBI:30616"/>
        <dbReference type="ChEBI" id="CHEBI:43474"/>
        <dbReference type="ChEBI" id="CHEBI:58359"/>
        <dbReference type="ChEBI" id="CHEBI:147286"/>
        <dbReference type="ChEBI" id="CHEBI:147287"/>
        <dbReference type="ChEBI" id="CHEBI:456216"/>
        <dbReference type="EC" id="6.3.5.3"/>
    </reaction>
</comment>
<comment type="pathway">
    <text evidence="1">Purine metabolism; IMP biosynthesis via de novo pathway; 5-amino-1-(5-phospho-D-ribosyl)imidazole from N(2)-formyl-N(1)-(5-phospho-D-ribosyl)glycinamide: step 1/2.</text>
</comment>
<comment type="subunit">
    <text evidence="1">Monomer.</text>
</comment>
<comment type="subcellular location">
    <subcellularLocation>
        <location evidence="1">Cytoplasm</location>
    </subcellularLocation>
</comment>
<comment type="similarity">
    <text evidence="1">In the N-terminal section; belongs to the FGAMS family.</text>
</comment>
<protein>
    <recommendedName>
        <fullName evidence="1">Phosphoribosylformylglycinamidine synthase</fullName>
        <shortName evidence="1">FGAM synthase</shortName>
        <shortName evidence="1">FGAMS</shortName>
        <ecNumber evidence="1">6.3.5.3</ecNumber>
    </recommendedName>
    <alternativeName>
        <fullName evidence="1">Formylglycinamide ribonucleotide amidotransferase</fullName>
        <shortName evidence="1">FGAR amidotransferase</shortName>
        <shortName evidence="1">FGAR-AT</shortName>
    </alternativeName>
</protein>
<evidence type="ECO:0000255" key="1">
    <source>
        <dbReference type="HAMAP-Rule" id="MF_00419"/>
    </source>
</evidence>
<evidence type="ECO:0000256" key="2">
    <source>
        <dbReference type="SAM" id="MobiDB-lite"/>
    </source>
</evidence>
<evidence type="ECO:0000305" key="3"/>
<name>PUR4_SALTI</name>
<proteinExistence type="inferred from homology"/>
<accession>Q8Z4L6</accession>
<gene>
    <name evidence="1" type="primary">purL</name>
    <name type="ordered locus">STY2812</name>
    <name type="ordered locus">t0291</name>
</gene>
<feature type="chain" id="PRO_0000100417" description="Phosphoribosylformylglycinamidine synthase">
    <location>
        <begin position="1"/>
        <end position="1295"/>
    </location>
</feature>
<feature type="domain" description="Glutamine amidotransferase type-1" evidence="1">
    <location>
        <begin position="1042"/>
        <end position="1295"/>
    </location>
</feature>
<feature type="region of interest" description="Disordered" evidence="2">
    <location>
        <begin position="305"/>
        <end position="327"/>
    </location>
</feature>
<feature type="active site" description="Nucleophile" evidence="1">
    <location>
        <position position="1135"/>
    </location>
</feature>
<feature type="active site" evidence="1">
    <location>
        <position position="1260"/>
    </location>
</feature>
<feature type="active site" evidence="1">
    <location>
        <position position="1262"/>
    </location>
</feature>
<feature type="binding site" evidence="1">
    <location>
        <begin position="307"/>
        <end position="318"/>
    </location>
    <ligand>
        <name>ATP</name>
        <dbReference type="ChEBI" id="CHEBI:30616"/>
    </ligand>
</feature>
<feature type="binding site" evidence="1">
    <location>
        <begin position="386"/>
        <end position="388"/>
    </location>
    <ligand>
        <name>ATP</name>
        <dbReference type="ChEBI" id="CHEBI:30616"/>
    </ligand>
</feature>
<feature type="binding site" evidence="1">
    <location>
        <position position="678"/>
    </location>
    <ligand>
        <name>ATP</name>
        <dbReference type="ChEBI" id="CHEBI:30616"/>
    </ligand>
</feature>
<feature type="binding site" evidence="1">
    <location>
        <position position="679"/>
    </location>
    <ligand>
        <name>Mg(2+)</name>
        <dbReference type="ChEBI" id="CHEBI:18420"/>
    </ligand>
</feature>
<feature type="binding site" evidence="1">
    <location>
        <position position="718"/>
    </location>
    <ligand>
        <name>Mg(2+)</name>
        <dbReference type="ChEBI" id="CHEBI:18420"/>
    </ligand>
</feature>
<feature type="binding site" evidence="1">
    <location>
        <position position="722"/>
    </location>
    <ligand>
        <name>Mg(2+)</name>
        <dbReference type="ChEBI" id="CHEBI:18420"/>
    </ligand>
</feature>
<feature type="binding site" evidence="1">
    <location>
        <position position="884"/>
    </location>
    <ligand>
        <name>Mg(2+)</name>
        <dbReference type="ChEBI" id="CHEBI:18420"/>
    </ligand>
</feature>
<feature type="binding site" evidence="1">
    <location>
        <position position="886"/>
    </location>
    <ligand>
        <name>ATP</name>
        <dbReference type="ChEBI" id="CHEBI:30616"/>
    </ligand>
</feature>
<feature type="sequence conflict" description="In Ref. 2; AAO68016." evidence="3" ref="2">
    <original>R</original>
    <variation>C</variation>
    <location>
        <position position="199"/>
    </location>
</feature>
<dbReference type="EC" id="6.3.5.3" evidence="1"/>
<dbReference type="EMBL" id="AL513382">
    <property type="protein sequence ID" value="CAD02768.1"/>
    <property type="molecule type" value="Genomic_DNA"/>
</dbReference>
<dbReference type="EMBL" id="AE014613">
    <property type="protein sequence ID" value="AAO68016.1"/>
    <property type="molecule type" value="Genomic_DNA"/>
</dbReference>
<dbReference type="RefSeq" id="NP_457095.1">
    <property type="nucleotide sequence ID" value="NC_003198.1"/>
</dbReference>
<dbReference type="RefSeq" id="WP_000970035.1">
    <property type="nucleotide sequence ID" value="NZ_QXGZ01000078.1"/>
</dbReference>
<dbReference type="SMR" id="Q8Z4L6"/>
<dbReference type="STRING" id="220341.gene:17586702"/>
<dbReference type="KEGG" id="stt:t0291"/>
<dbReference type="KEGG" id="sty:STY2812"/>
<dbReference type="PATRIC" id="fig|220341.7.peg.2860"/>
<dbReference type="eggNOG" id="COG0046">
    <property type="taxonomic scope" value="Bacteria"/>
</dbReference>
<dbReference type="eggNOG" id="COG0047">
    <property type="taxonomic scope" value="Bacteria"/>
</dbReference>
<dbReference type="HOGENOM" id="CLU_001031_0_2_6"/>
<dbReference type="OMA" id="LSANWMW"/>
<dbReference type="OrthoDB" id="9804441at2"/>
<dbReference type="UniPathway" id="UPA00074">
    <property type="reaction ID" value="UER00128"/>
</dbReference>
<dbReference type="Proteomes" id="UP000000541">
    <property type="component" value="Chromosome"/>
</dbReference>
<dbReference type="Proteomes" id="UP000002670">
    <property type="component" value="Chromosome"/>
</dbReference>
<dbReference type="GO" id="GO:0005737">
    <property type="term" value="C:cytoplasm"/>
    <property type="evidence" value="ECO:0007669"/>
    <property type="project" value="UniProtKB-SubCell"/>
</dbReference>
<dbReference type="GO" id="GO:0005524">
    <property type="term" value="F:ATP binding"/>
    <property type="evidence" value="ECO:0007669"/>
    <property type="project" value="UniProtKB-UniRule"/>
</dbReference>
<dbReference type="GO" id="GO:0046872">
    <property type="term" value="F:metal ion binding"/>
    <property type="evidence" value="ECO:0007669"/>
    <property type="project" value="UniProtKB-KW"/>
</dbReference>
<dbReference type="GO" id="GO:0004642">
    <property type="term" value="F:phosphoribosylformylglycinamidine synthase activity"/>
    <property type="evidence" value="ECO:0007669"/>
    <property type="project" value="UniProtKB-UniRule"/>
</dbReference>
<dbReference type="GO" id="GO:0006189">
    <property type="term" value="P:'de novo' IMP biosynthetic process"/>
    <property type="evidence" value="ECO:0007669"/>
    <property type="project" value="UniProtKB-UniRule"/>
</dbReference>
<dbReference type="CDD" id="cd01740">
    <property type="entry name" value="GATase1_FGAR_AT"/>
    <property type="match status" value="1"/>
</dbReference>
<dbReference type="CDD" id="cd02193">
    <property type="entry name" value="PurL"/>
    <property type="match status" value="1"/>
</dbReference>
<dbReference type="CDD" id="cd02203">
    <property type="entry name" value="PurL_repeat1"/>
    <property type="match status" value="1"/>
</dbReference>
<dbReference type="FunFam" id="1.10.8.750:FF:000002">
    <property type="entry name" value="Phosphoribosylformylglycinamidine synthase"/>
    <property type="match status" value="1"/>
</dbReference>
<dbReference type="FunFam" id="3.30.1330.10:FF:000002">
    <property type="entry name" value="Phosphoribosylformylglycinamidine synthase"/>
    <property type="match status" value="1"/>
</dbReference>
<dbReference type="FunFam" id="3.30.1330.10:FF:000005">
    <property type="entry name" value="Phosphoribosylformylglycinamidine synthase"/>
    <property type="match status" value="1"/>
</dbReference>
<dbReference type="FunFam" id="3.40.50.880:FF:000008">
    <property type="entry name" value="Phosphoribosylformylglycinamidine synthase"/>
    <property type="match status" value="1"/>
</dbReference>
<dbReference type="FunFam" id="3.90.650.10:FF:000002">
    <property type="entry name" value="Phosphoribosylformylglycinamidine synthase"/>
    <property type="match status" value="1"/>
</dbReference>
<dbReference type="FunFam" id="3.90.650.10:FF:000005">
    <property type="entry name" value="Phosphoribosylformylglycinamidine synthase"/>
    <property type="match status" value="1"/>
</dbReference>
<dbReference type="Gene3D" id="3.40.50.880">
    <property type="match status" value="1"/>
</dbReference>
<dbReference type="Gene3D" id="1.10.8.750">
    <property type="entry name" value="Phosphoribosylformylglycinamidine synthase, linker domain"/>
    <property type="match status" value="1"/>
</dbReference>
<dbReference type="Gene3D" id="3.90.650.10">
    <property type="entry name" value="PurM-like C-terminal domain"/>
    <property type="match status" value="2"/>
</dbReference>
<dbReference type="Gene3D" id="3.30.1330.10">
    <property type="entry name" value="PurM-like, N-terminal domain"/>
    <property type="match status" value="2"/>
</dbReference>
<dbReference type="HAMAP" id="MF_00419">
    <property type="entry name" value="PurL_1"/>
    <property type="match status" value="1"/>
</dbReference>
<dbReference type="InterPro" id="IPR029062">
    <property type="entry name" value="Class_I_gatase-like"/>
</dbReference>
<dbReference type="InterPro" id="IPR040707">
    <property type="entry name" value="FGAR-AT_N"/>
</dbReference>
<dbReference type="InterPro" id="IPR055181">
    <property type="entry name" value="FGAR-AT_PurM_N-like"/>
</dbReference>
<dbReference type="InterPro" id="IPR010073">
    <property type="entry name" value="PurL_large"/>
</dbReference>
<dbReference type="InterPro" id="IPR041609">
    <property type="entry name" value="PurL_linker"/>
</dbReference>
<dbReference type="InterPro" id="IPR010918">
    <property type="entry name" value="PurM-like_C_dom"/>
</dbReference>
<dbReference type="InterPro" id="IPR036676">
    <property type="entry name" value="PurM-like_C_sf"/>
</dbReference>
<dbReference type="InterPro" id="IPR036921">
    <property type="entry name" value="PurM-like_N_sf"/>
</dbReference>
<dbReference type="InterPro" id="IPR036604">
    <property type="entry name" value="PurS-like_sf"/>
</dbReference>
<dbReference type="NCBIfam" id="TIGR01735">
    <property type="entry name" value="FGAM_synt"/>
    <property type="match status" value="1"/>
</dbReference>
<dbReference type="NCBIfam" id="NF003672">
    <property type="entry name" value="PRK05297.1"/>
    <property type="match status" value="1"/>
</dbReference>
<dbReference type="PANTHER" id="PTHR10099">
    <property type="entry name" value="PHOSPHORIBOSYLFORMYLGLYCINAMIDINE SYNTHASE"/>
    <property type="match status" value="1"/>
</dbReference>
<dbReference type="PANTHER" id="PTHR10099:SF1">
    <property type="entry name" value="PHOSPHORIBOSYLFORMYLGLYCINAMIDINE SYNTHASE"/>
    <property type="match status" value="1"/>
</dbReference>
<dbReference type="Pfam" id="PF02769">
    <property type="entry name" value="AIRS_C"/>
    <property type="match status" value="2"/>
</dbReference>
<dbReference type="Pfam" id="PF18072">
    <property type="entry name" value="FGAR-AT_linker"/>
    <property type="match status" value="1"/>
</dbReference>
<dbReference type="Pfam" id="PF18076">
    <property type="entry name" value="FGAR-AT_N"/>
    <property type="match status" value="1"/>
</dbReference>
<dbReference type="Pfam" id="PF22689">
    <property type="entry name" value="FGAR-AT_PurM_N-like"/>
    <property type="match status" value="1"/>
</dbReference>
<dbReference type="Pfam" id="PF13507">
    <property type="entry name" value="GATase_5"/>
    <property type="match status" value="1"/>
</dbReference>
<dbReference type="SMART" id="SM01211">
    <property type="entry name" value="GATase_5"/>
    <property type="match status" value="1"/>
</dbReference>
<dbReference type="SUPFAM" id="SSF52317">
    <property type="entry name" value="Class I glutamine amidotransferase-like"/>
    <property type="match status" value="1"/>
</dbReference>
<dbReference type="SUPFAM" id="SSF109736">
    <property type="entry name" value="FGAM synthase PurL, linker domain"/>
    <property type="match status" value="1"/>
</dbReference>
<dbReference type="SUPFAM" id="SSF56042">
    <property type="entry name" value="PurM C-terminal domain-like"/>
    <property type="match status" value="2"/>
</dbReference>
<dbReference type="SUPFAM" id="SSF55326">
    <property type="entry name" value="PurM N-terminal domain-like"/>
    <property type="match status" value="2"/>
</dbReference>
<dbReference type="SUPFAM" id="SSF82697">
    <property type="entry name" value="PurS-like"/>
    <property type="match status" value="1"/>
</dbReference>
<dbReference type="PROSITE" id="PS51273">
    <property type="entry name" value="GATASE_TYPE_1"/>
    <property type="match status" value="1"/>
</dbReference>